<evidence type="ECO:0000250" key="1">
    <source>
        <dbReference type="UniProtKB" id="P93017"/>
    </source>
</evidence>
<evidence type="ECO:0000256" key="2">
    <source>
        <dbReference type="SAM" id="MobiDB-lite"/>
    </source>
</evidence>
<evidence type="ECO:0000269" key="3">
    <source>
    </source>
</evidence>
<evidence type="ECO:0000269" key="4">
    <source>
    </source>
</evidence>
<evidence type="ECO:0000269" key="5">
    <source>
    </source>
</evidence>
<evidence type="ECO:0000269" key="6">
    <source>
    </source>
</evidence>
<evidence type="ECO:0000269" key="7">
    <source>
    </source>
</evidence>
<evidence type="ECO:0000303" key="8">
    <source>
    </source>
</evidence>
<evidence type="ECO:0000303" key="9">
    <source>
    </source>
</evidence>
<evidence type="ECO:0000303" key="10">
    <source ref="1"/>
</evidence>
<evidence type="ECO:0000305" key="11"/>
<evidence type="ECO:0000312" key="12">
    <source>
        <dbReference type="Araport" id="AT1G28330"/>
    </source>
</evidence>
<dbReference type="EMBL" id="AF053746">
    <property type="protein sequence ID" value="AAC26202.1"/>
    <property type="molecule type" value="mRNA"/>
</dbReference>
<dbReference type="EMBL" id="AF053747">
    <property type="protein sequence ID" value="AAC26203.1"/>
    <property type="molecule type" value="Genomic_DNA"/>
</dbReference>
<dbReference type="EMBL" id="AC021044">
    <property type="protein sequence ID" value="AAF98422.1"/>
    <property type="molecule type" value="Genomic_DNA"/>
</dbReference>
<dbReference type="EMBL" id="CP002684">
    <property type="protein sequence ID" value="AEE30954.1"/>
    <property type="molecule type" value="Genomic_DNA"/>
</dbReference>
<dbReference type="EMBL" id="CP002684">
    <property type="protein sequence ID" value="AEE30955.1"/>
    <property type="molecule type" value="Genomic_DNA"/>
</dbReference>
<dbReference type="EMBL" id="CP002684">
    <property type="protein sequence ID" value="AEE30956.1"/>
    <property type="molecule type" value="Genomic_DNA"/>
</dbReference>
<dbReference type="EMBL" id="CP002684">
    <property type="protein sequence ID" value="AEE30957.1"/>
    <property type="molecule type" value="Genomic_DNA"/>
</dbReference>
<dbReference type="EMBL" id="CP002684">
    <property type="protein sequence ID" value="AEE30958.2"/>
    <property type="molecule type" value="Genomic_DNA"/>
</dbReference>
<dbReference type="EMBL" id="CP002684">
    <property type="protein sequence ID" value="ANM58145.1"/>
    <property type="molecule type" value="Genomic_DNA"/>
</dbReference>
<dbReference type="EMBL" id="AY037227">
    <property type="protein sequence ID" value="AAK59827.1"/>
    <property type="molecule type" value="mRNA"/>
</dbReference>
<dbReference type="EMBL" id="AY074825">
    <property type="protein sequence ID" value="AAL69521.1"/>
    <property type="molecule type" value="mRNA"/>
</dbReference>
<dbReference type="EMBL" id="AK317149">
    <property type="protein sequence ID" value="BAH19835.1"/>
    <property type="molecule type" value="mRNA"/>
</dbReference>
<dbReference type="PIR" id="T52190">
    <property type="entry name" value="T52190"/>
</dbReference>
<dbReference type="RefSeq" id="NP_001154378.1">
    <molecule id="B9DGG8-4"/>
    <property type="nucleotide sequence ID" value="NM_001160906.1"/>
</dbReference>
<dbReference type="RefSeq" id="NP_001319096.1">
    <molecule id="B9DGG8-5"/>
    <property type="nucleotide sequence ID" value="NM_001332808.1"/>
</dbReference>
<dbReference type="RefSeq" id="NP_001320602.1">
    <molecule id="B9DGG8-5"/>
    <property type="nucleotide sequence ID" value="NM_001332809.1"/>
</dbReference>
<dbReference type="RefSeq" id="NP_564305.1">
    <molecule id="B9DGG8-2"/>
    <property type="nucleotide sequence ID" value="NM_102599.3"/>
</dbReference>
<dbReference type="RefSeq" id="NP_849720.1">
    <molecule id="B9DGG8-1"/>
    <property type="nucleotide sequence ID" value="NM_179389.4"/>
</dbReference>
<dbReference type="RefSeq" id="NP_849721.1">
    <molecule id="B9DGG8-1"/>
    <property type="nucleotide sequence ID" value="NM_179390.1"/>
</dbReference>
<dbReference type="FunCoup" id="B9DGG8">
    <property type="interactions" value="91"/>
</dbReference>
<dbReference type="STRING" id="3702.B9DGG8"/>
<dbReference type="iPTMnet" id="B9DGG8"/>
<dbReference type="PaxDb" id="3702-AT1G28330.5"/>
<dbReference type="ProteomicsDB" id="224352">
    <molecule id="B9DGG8-1"/>
</dbReference>
<dbReference type="EnsemblPlants" id="AT1G28330.1">
    <molecule id="B9DGG8-2"/>
    <property type="protein sequence ID" value="AT1G28330.1"/>
    <property type="gene ID" value="AT1G28330"/>
</dbReference>
<dbReference type="EnsemblPlants" id="AT1G28330.2">
    <molecule id="B9DGG8-1"/>
    <property type="protein sequence ID" value="AT1G28330.2"/>
    <property type="gene ID" value="AT1G28330"/>
</dbReference>
<dbReference type="EnsemblPlants" id="AT1G28330.3">
    <molecule id="B9DGG8-1"/>
    <property type="protein sequence ID" value="AT1G28330.3"/>
    <property type="gene ID" value="AT1G28330"/>
</dbReference>
<dbReference type="EnsemblPlants" id="AT1G28330.4">
    <molecule id="B9DGG8-4"/>
    <property type="protein sequence ID" value="AT1G28330.4"/>
    <property type="gene ID" value="AT1G28330"/>
</dbReference>
<dbReference type="EnsemblPlants" id="AT1G28330.5">
    <molecule id="B9DGG8-5"/>
    <property type="protein sequence ID" value="AT1G28330.5"/>
    <property type="gene ID" value="AT1G28330"/>
</dbReference>
<dbReference type="EnsemblPlants" id="AT1G28330.6">
    <molecule id="B9DGG8-5"/>
    <property type="protein sequence ID" value="AT1G28330.6"/>
    <property type="gene ID" value="AT1G28330"/>
</dbReference>
<dbReference type="GeneID" id="839729"/>
<dbReference type="Gramene" id="AT1G28330.1">
    <molecule id="B9DGG8-2"/>
    <property type="protein sequence ID" value="AT1G28330.1"/>
    <property type="gene ID" value="AT1G28330"/>
</dbReference>
<dbReference type="Gramene" id="AT1G28330.2">
    <molecule id="B9DGG8-1"/>
    <property type="protein sequence ID" value="AT1G28330.2"/>
    <property type="gene ID" value="AT1G28330"/>
</dbReference>
<dbReference type="Gramene" id="AT1G28330.3">
    <molecule id="B9DGG8-1"/>
    <property type="protein sequence ID" value="AT1G28330.3"/>
    <property type="gene ID" value="AT1G28330"/>
</dbReference>
<dbReference type="Gramene" id="AT1G28330.4">
    <molecule id="B9DGG8-4"/>
    <property type="protein sequence ID" value="AT1G28330.4"/>
    <property type="gene ID" value="AT1G28330"/>
</dbReference>
<dbReference type="Gramene" id="AT1G28330.5">
    <molecule id="B9DGG8-5"/>
    <property type="protein sequence ID" value="AT1G28330.5"/>
    <property type="gene ID" value="AT1G28330"/>
</dbReference>
<dbReference type="Gramene" id="AT1G28330.6">
    <molecule id="B9DGG8-5"/>
    <property type="protein sequence ID" value="AT1G28330.6"/>
    <property type="gene ID" value="AT1G28330"/>
</dbReference>
<dbReference type="KEGG" id="ath:AT1G28330"/>
<dbReference type="Araport" id="AT1G28330"/>
<dbReference type="TAIR" id="AT1G28330">
    <property type="gene designation" value="DYL1"/>
</dbReference>
<dbReference type="eggNOG" id="ENOG502S158">
    <property type="taxonomic scope" value="Eukaryota"/>
</dbReference>
<dbReference type="InParanoid" id="B9DGG8"/>
<dbReference type="OMA" id="NKVMHRS"/>
<dbReference type="OrthoDB" id="1902663at2759"/>
<dbReference type="PhylomeDB" id="B9DGG8"/>
<dbReference type="PRO" id="PR:B9DGG8"/>
<dbReference type="Proteomes" id="UP000006548">
    <property type="component" value="Chromosome 1"/>
</dbReference>
<dbReference type="ExpressionAtlas" id="B9DGG8">
    <property type="expression patterns" value="baseline and differential"/>
</dbReference>
<dbReference type="GO" id="GO:0009750">
    <property type="term" value="P:response to fructose"/>
    <property type="evidence" value="ECO:0000270"/>
    <property type="project" value="TAIR"/>
</dbReference>
<dbReference type="GO" id="GO:0009749">
    <property type="term" value="P:response to glucose"/>
    <property type="evidence" value="ECO:0000270"/>
    <property type="project" value="TAIR"/>
</dbReference>
<dbReference type="GO" id="GO:0009744">
    <property type="term" value="P:response to sucrose"/>
    <property type="evidence" value="ECO:0000270"/>
    <property type="project" value="TAIR"/>
</dbReference>
<dbReference type="InterPro" id="IPR008406">
    <property type="entry name" value="DRM/ARP"/>
</dbReference>
<dbReference type="PANTHER" id="PTHR33565">
    <property type="entry name" value="DORMANCY-ASSOCIATED PROTEIN 1"/>
    <property type="match status" value="1"/>
</dbReference>
<dbReference type="PANTHER" id="PTHR33565:SF2">
    <property type="entry name" value="DORMANCY-ASSOCIATED PROTEIN 1"/>
    <property type="match status" value="1"/>
</dbReference>
<dbReference type="Pfam" id="PF05564">
    <property type="entry name" value="Auxin_repressed"/>
    <property type="match status" value="1"/>
</dbReference>
<reference key="1">
    <citation type="online journal article" date="1998" name="Plant Gene Register">
        <title>Nucleotide sequence of Atdrm1-1 cDNA and genomic clones, an Arabidopsis homolog of a dormant, bud-associated gene from pea.</title>
        <authorList>
            <person name="Stafstrom J.P."/>
            <person name="Krueger M.T."/>
            <person name="Stoudt W."/>
        </authorList>
        <locator>PGR98-099</locator>
    </citation>
    <scope>NUCLEOTIDE SEQUENCE [GENOMIC DNA / MRNA] (ISOFORM 2)</scope>
</reference>
<reference key="2">
    <citation type="journal article" date="2014" name="Mol. Genet. Genomics">
        <title>DRM1 and DRM2 expression regulation: potential role of splice variants in response to stress and environmental factors in Arabidopsis.</title>
        <authorList>
            <person name="Rae G.M."/>
            <person name="Uversky V.N."/>
            <person name="David K."/>
            <person name="Wood M."/>
        </authorList>
    </citation>
    <scope>NUCLEOTIDE SEQUENCE [MRNA] (ISOFORM 5)</scope>
    <scope>ALTERNATIVE SPLICING</scope>
    <scope>TISSUE SPECIFICITY</scope>
    <scope>INDUCTION</scope>
    <scope>TOPOLOGY</scope>
</reference>
<reference key="3">
    <citation type="journal article" date="2000" name="Nature">
        <title>Sequence and analysis of chromosome 1 of the plant Arabidopsis thaliana.</title>
        <authorList>
            <person name="Theologis A."/>
            <person name="Ecker J.R."/>
            <person name="Palm C.J."/>
            <person name="Federspiel N.A."/>
            <person name="Kaul S."/>
            <person name="White O."/>
            <person name="Alonso J."/>
            <person name="Altafi H."/>
            <person name="Araujo R."/>
            <person name="Bowman C.L."/>
            <person name="Brooks S.Y."/>
            <person name="Buehler E."/>
            <person name="Chan A."/>
            <person name="Chao Q."/>
            <person name="Chen H."/>
            <person name="Cheuk R.F."/>
            <person name="Chin C.W."/>
            <person name="Chung M.K."/>
            <person name="Conn L."/>
            <person name="Conway A.B."/>
            <person name="Conway A.R."/>
            <person name="Creasy T.H."/>
            <person name="Dewar K."/>
            <person name="Dunn P."/>
            <person name="Etgu P."/>
            <person name="Feldblyum T.V."/>
            <person name="Feng J.-D."/>
            <person name="Fong B."/>
            <person name="Fujii C.Y."/>
            <person name="Gill J.E."/>
            <person name="Goldsmith A.D."/>
            <person name="Haas B."/>
            <person name="Hansen N.F."/>
            <person name="Hughes B."/>
            <person name="Huizar L."/>
            <person name="Hunter J.L."/>
            <person name="Jenkins J."/>
            <person name="Johnson-Hopson C."/>
            <person name="Khan S."/>
            <person name="Khaykin E."/>
            <person name="Kim C.J."/>
            <person name="Koo H.L."/>
            <person name="Kremenetskaia I."/>
            <person name="Kurtz D.B."/>
            <person name="Kwan A."/>
            <person name="Lam B."/>
            <person name="Langin-Hooper S."/>
            <person name="Lee A."/>
            <person name="Lee J.M."/>
            <person name="Lenz C.A."/>
            <person name="Li J.H."/>
            <person name="Li Y.-P."/>
            <person name="Lin X."/>
            <person name="Liu S.X."/>
            <person name="Liu Z.A."/>
            <person name="Luros J.S."/>
            <person name="Maiti R."/>
            <person name="Marziali A."/>
            <person name="Militscher J."/>
            <person name="Miranda M."/>
            <person name="Nguyen M."/>
            <person name="Nierman W.C."/>
            <person name="Osborne B.I."/>
            <person name="Pai G."/>
            <person name="Peterson J."/>
            <person name="Pham P.K."/>
            <person name="Rizzo M."/>
            <person name="Rooney T."/>
            <person name="Rowley D."/>
            <person name="Sakano H."/>
            <person name="Salzberg S.L."/>
            <person name="Schwartz J.R."/>
            <person name="Shinn P."/>
            <person name="Southwick A.M."/>
            <person name="Sun H."/>
            <person name="Tallon L.J."/>
            <person name="Tambunga G."/>
            <person name="Toriumi M.J."/>
            <person name="Town C.D."/>
            <person name="Utterback T."/>
            <person name="Van Aken S."/>
            <person name="Vaysberg M."/>
            <person name="Vysotskaia V.S."/>
            <person name="Walker M."/>
            <person name="Wu D."/>
            <person name="Yu G."/>
            <person name="Fraser C.M."/>
            <person name="Venter J.C."/>
            <person name="Davis R.W."/>
        </authorList>
    </citation>
    <scope>NUCLEOTIDE SEQUENCE [LARGE SCALE GENOMIC DNA]</scope>
    <source>
        <strain>cv. Columbia</strain>
    </source>
</reference>
<reference key="4">
    <citation type="journal article" date="2017" name="Plant J.">
        <title>Araport11: a complete reannotation of the Arabidopsis thaliana reference genome.</title>
        <authorList>
            <person name="Cheng C.Y."/>
            <person name="Krishnakumar V."/>
            <person name="Chan A.P."/>
            <person name="Thibaud-Nissen F."/>
            <person name="Schobel S."/>
            <person name="Town C.D."/>
        </authorList>
    </citation>
    <scope>GENOME REANNOTATION</scope>
    <source>
        <strain>cv. Columbia</strain>
    </source>
</reference>
<reference key="5">
    <citation type="journal article" date="2003" name="Science">
        <title>Empirical analysis of transcriptional activity in the Arabidopsis genome.</title>
        <authorList>
            <person name="Yamada K."/>
            <person name="Lim J."/>
            <person name="Dale J.M."/>
            <person name="Chen H."/>
            <person name="Shinn P."/>
            <person name="Palm C.J."/>
            <person name="Southwick A.M."/>
            <person name="Wu H.C."/>
            <person name="Kim C.J."/>
            <person name="Nguyen M."/>
            <person name="Pham P.K."/>
            <person name="Cheuk R.F."/>
            <person name="Karlin-Newmann G."/>
            <person name="Liu S.X."/>
            <person name="Lam B."/>
            <person name="Sakano H."/>
            <person name="Wu T."/>
            <person name="Yu G."/>
            <person name="Miranda M."/>
            <person name="Quach H.L."/>
            <person name="Tripp M."/>
            <person name="Chang C.H."/>
            <person name="Lee J.M."/>
            <person name="Toriumi M.J."/>
            <person name="Chan M.M."/>
            <person name="Tang C.C."/>
            <person name="Onodera C.S."/>
            <person name="Deng J.M."/>
            <person name="Akiyama K."/>
            <person name="Ansari Y."/>
            <person name="Arakawa T."/>
            <person name="Banh J."/>
            <person name="Banno F."/>
            <person name="Bowser L."/>
            <person name="Brooks S.Y."/>
            <person name="Carninci P."/>
            <person name="Chao Q."/>
            <person name="Choy N."/>
            <person name="Enju A."/>
            <person name="Goldsmith A.D."/>
            <person name="Gurjal M."/>
            <person name="Hansen N.F."/>
            <person name="Hayashizaki Y."/>
            <person name="Johnson-Hopson C."/>
            <person name="Hsuan V.W."/>
            <person name="Iida K."/>
            <person name="Karnes M."/>
            <person name="Khan S."/>
            <person name="Koesema E."/>
            <person name="Ishida J."/>
            <person name="Jiang P.X."/>
            <person name="Jones T."/>
            <person name="Kawai J."/>
            <person name="Kamiya A."/>
            <person name="Meyers C."/>
            <person name="Nakajima M."/>
            <person name="Narusaka M."/>
            <person name="Seki M."/>
            <person name="Sakurai T."/>
            <person name="Satou M."/>
            <person name="Tamse R."/>
            <person name="Vaysberg M."/>
            <person name="Wallender E.K."/>
            <person name="Wong C."/>
            <person name="Yamamura Y."/>
            <person name="Yuan S."/>
            <person name="Shinozaki K."/>
            <person name="Davis R.W."/>
            <person name="Theologis A."/>
            <person name="Ecker J.R."/>
        </authorList>
    </citation>
    <scope>NUCLEOTIDE SEQUENCE [LARGE SCALE MRNA] (ISOFORM 2)</scope>
    <source>
        <strain>cv. Columbia</strain>
    </source>
</reference>
<reference key="6">
    <citation type="journal article" date="2009" name="DNA Res.">
        <title>Analysis of multiple occurrences of alternative splicing events in Arabidopsis thaliana using novel sequenced full-length cDNAs.</title>
        <authorList>
            <person name="Iida K."/>
            <person name="Fukami-Kobayashi K."/>
            <person name="Toyoda A."/>
            <person name="Sakaki Y."/>
            <person name="Kobayashi M."/>
            <person name="Seki M."/>
            <person name="Shinozaki K."/>
        </authorList>
    </citation>
    <scope>NUCLEOTIDE SEQUENCE [LARGE SCALE MRNA] (ISOFORM 1)</scope>
    <source>
        <strain>cv. Columbia</strain>
    </source>
</reference>
<reference key="7">
    <citation type="journal article" date="2005" name="Plant Physiol.">
        <title>Identification of cis-elements that regulate gene expression during initiation of axillary bud outgrowth in Arabidopsis.</title>
        <authorList>
            <person name="Tatematsu K."/>
            <person name="Ward S."/>
            <person name="Leyser O."/>
            <person name="Kamiya Y."/>
            <person name="Nambara E."/>
        </authorList>
    </citation>
    <scope>INDUCTION BY DECAPITATION</scope>
</reference>
<reference key="8">
    <citation type="journal article" date="2006" name="J. Plant Res.">
        <title>Identification of sugar-modulated genes and evidence for in vivo sugar sensing in Arabidopsis.</title>
        <authorList>
            <person name="Gonzali S."/>
            <person name="Loreti E."/>
            <person name="Solfanelli C."/>
            <person name="Novi G."/>
            <person name="Alpi A."/>
            <person name="Perata P."/>
        </authorList>
    </citation>
    <scope>INDUCTION BY SUGARS</scope>
</reference>
<reference key="9">
    <citation type="journal article" date="2009" name="Plant Physiol.">
        <title>Large-scale Arabidopsis phosphoproteome profiling reveals novel chloroplast kinase substrates and phosphorylation networks.</title>
        <authorList>
            <person name="Reiland S."/>
            <person name="Messerli G."/>
            <person name="Baerenfaller K."/>
            <person name="Gerrits B."/>
            <person name="Endler A."/>
            <person name="Grossmann J."/>
            <person name="Gruissem W."/>
            <person name="Baginsky S."/>
        </authorList>
    </citation>
    <scope>IDENTIFICATION BY MASS SPECTROMETRY [LARGE SCALE ANALYSIS]</scope>
</reference>
<reference key="10">
    <citation type="journal article" date="2013" name="Mol. Biol. Rep.">
        <title>Molecular characterization of the Brassica rapa auxin-repressed, superfamily genes, BrARP1 and BrDRM1.</title>
        <authorList>
            <person name="Lee J."/>
            <person name="Han C.T."/>
            <person name="Hur Y."/>
        </authorList>
    </citation>
    <scope>DISRUPTION PHENOTYPE</scope>
</reference>
<reference key="11">
    <citation type="journal article" date="2013" name="Plant Physiol.">
        <title>EBE, an AP2/ERF transcription factor highly expressed in proliferating cells, affects shoot architecture in Arabidopsis.</title>
        <authorList>
            <person name="Mehrnia M."/>
            <person name="Balazadeh S."/>
            <person name="Zanor M.I."/>
            <person name="Mueller-Roeber B."/>
        </authorList>
    </citation>
    <scope>INDUCTION BY ERF114</scope>
</reference>
<keyword id="KW-0025">Alternative splicing</keyword>
<keyword id="KW-0217">Developmental protein</keyword>
<keyword id="KW-0597">Phosphoprotein</keyword>
<keyword id="KW-1185">Reference proteome</keyword>
<sequence>MVLLEKLWDDVVAGPQPDRGLGRLRKITTQPINIRDIGEGSSSKVVMHRSLTMPAAVSPGTPTTPTTPTTPRKDNVWRSVFNPGSNLATRAIGSNIFDKPTHPNSPSVYDCVDNEAQRKEHVALCLVGAWIK</sequence>
<protein>
    <recommendedName>
        <fullName evidence="10">Dormancy-associated protein 1</fullName>
        <shortName evidence="10">AtDRM1</shortName>
    </recommendedName>
    <alternativeName>
        <fullName evidence="8">Dormancy-associated protein-like 1</fullName>
        <shortName>AtDYL1</shortName>
    </alternativeName>
</protein>
<feature type="chain" id="PRO_0000436079" description="Dormancy-associated protein 1">
    <location>
        <begin position="1"/>
        <end position="132"/>
    </location>
</feature>
<feature type="region of interest" description="Disordered" evidence="2">
    <location>
        <begin position="53"/>
        <end position="76"/>
    </location>
</feature>
<feature type="compositionally biased region" description="Low complexity" evidence="2">
    <location>
        <begin position="61"/>
        <end position="70"/>
    </location>
</feature>
<feature type="modified residue" description="Phosphothreonine" evidence="1">
    <location>
        <position position="64"/>
    </location>
</feature>
<feature type="splice variant" id="VSP_058252" description="In isoform 2.">
    <original>CVDNEAQRKEHVALCLVGAWIK</original>
    <variation>WLYSGDSRSQHR</variation>
    <location>
        <begin position="111"/>
        <end position="132"/>
    </location>
</feature>
<feature type="splice variant" id="VSP_058253" description="In isoform 4.">
    <original>CVDNEAQRKEHVALCLVGAWIK</original>
    <variation>WLYSGDSRSQHQWIK</variation>
    <location>
        <begin position="111"/>
        <end position="132"/>
    </location>
</feature>
<feature type="splice variant" id="VSP_058254" description="In isoform 5.">
    <original>CVDNEAQRKEHVALCLVGAWIK</original>
    <variation>W</variation>
    <location>
        <begin position="111"/>
        <end position="132"/>
    </location>
</feature>
<feature type="splice variant" id="VSP_058255" description="In isoform 3.">
    <original>IK</original>
    <variation>IKSRVVGSLIDRTWGVCRLYSGDSRSQHR</variation>
    <location>
        <begin position="131"/>
        <end position="132"/>
    </location>
</feature>
<organism>
    <name type="scientific">Arabidopsis thaliana</name>
    <name type="common">Mouse-ear cress</name>
    <dbReference type="NCBI Taxonomy" id="3702"/>
    <lineage>
        <taxon>Eukaryota</taxon>
        <taxon>Viridiplantae</taxon>
        <taxon>Streptophyta</taxon>
        <taxon>Embryophyta</taxon>
        <taxon>Tracheophyta</taxon>
        <taxon>Spermatophyta</taxon>
        <taxon>Magnoliopsida</taxon>
        <taxon>eudicotyledons</taxon>
        <taxon>Gunneridae</taxon>
        <taxon>Pentapetalae</taxon>
        <taxon>rosids</taxon>
        <taxon>malvids</taxon>
        <taxon>Brassicales</taxon>
        <taxon>Brassicaceae</taxon>
        <taxon>Camelineae</taxon>
        <taxon>Arabidopsis</taxon>
    </lineage>
</organism>
<comment type="alternative products">
    <event type="alternative splicing"/>
    <isoform>
        <id>B9DGG8-1</id>
        <name>1</name>
        <sequence type="displayed"/>
    </isoform>
    <isoform>
        <id>B9DGG8-2</id>
        <name>2</name>
        <sequence type="described" ref="VSP_058252"/>
    </isoform>
    <isoform>
        <id>B9DGG8-3</id>
        <name>3</name>
        <sequence type="described" ref="VSP_058255"/>
    </isoform>
    <isoform>
        <id>B9DGG8-4</id>
        <name>4</name>
        <sequence type="described" ref="VSP_058253"/>
    </isoform>
    <isoform>
        <id>B9DGG8-5</id>
        <name>5</name>
        <sequence type="described" ref="VSP_058254"/>
    </isoform>
</comment>
<comment type="tissue specificity">
    <text evidence="7">Isoform 1: Expressed mainly in the low bolt. Isoform 2: Expressed mainly in the low bolt. Detected in flowers. Isoform 4: Expressed mainly in the low bolt. Isoform 5: Expressed mainly in the 6 days old seedlings. Detected in 16 days old seedlings, axil, low bolt and floral samples, but only barely in leaves and top bolt.</text>
</comment>
<comment type="induction">
    <text evidence="3 4 6 7">Circadian-regulation (PubMed:24442277). Down-regulated in axillary buds within 24 hours after decapitation and then up-regulated (PubMed:15908603). Down-regulated by the transcription factor ERF114 (PubMed:23616605). Down-regulated by cold (PubMed:24442277). Almost complete down-regulation by sucrose, fructose and glucose, but not by other sugars (PubMed:16463203). Up-regulated by heat and dark growth conditions (PubMed:24442277). Isoform 2: Up-regulated by salt. Isoform 4: Up-regulated by salt. Isoform 1: Not up-regulated by salt. Isoform 5: Not up-regulated by salt (PubMed:24442277).</text>
</comment>
<comment type="disruption phenotype">
    <text evidence="5">No visible phenotype. Drm1 and drmh1 double mutants have no visible phenotype.</text>
</comment>
<comment type="miscellaneous">
    <text evidence="9">Predicted to be an intrinsically disordered protein.</text>
</comment>
<comment type="miscellaneous">
    <molecule>Isoform 3</molecule>
    <text evidence="7">May be artifactual or particularly rare.</text>
</comment>
<comment type="similarity">
    <text evidence="11">Belongs to the DRM1/ARP family.</text>
</comment>
<name>DRM1_ARATH</name>
<accession>B9DGG8</accession>
<accession>F4HWK7</accession>
<accession>F4HWK9</accession>
<accession>O65923</accession>
<gene>
    <name evidence="10" type="primary">DRM1</name>
    <name evidence="8" type="synonym">DYL1</name>
    <name evidence="12" type="ordered locus">At1g28330</name>
</gene>
<proteinExistence type="evidence at protein level"/>